<name>CYSH_ECOLI</name>
<organism>
    <name type="scientific">Escherichia coli (strain K12)</name>
    <dbReference type="NCBI Taxonomy" id="83333"/>
    <lineage>
        <taxon>Bacteria</taxon>
        <taxon>Pseudomonadati</taxon>
        <taxon>Pseudomonadota</taxon>
        <taxon>Gammaproteobacteria</taxon>
        <taxon>Enterobacterales</taxon>
        <taxon>Enterobacteriaceae</taxon>
        <taxon>Escherichia</taxon>
    </lineage>
</organism>
<reference key="1">
    <citation type="journal article" date="1991" name="Mol. Gen. Genet.">
        <title>Characterisation of the gene cysH and of its product phospho-adenylylsulphate reductase from Escherichia coli.</title>
        <authorList>
            <person name="Krone F.A."/>
            <person name="Westphal G."/>
            <person name="Schwenn J.D."/>
        </authorList>
    </citation>
    <scope>NUCLEOTIDE SEQUENCE [GENOMIC DNA]</scope>
    <source>
        <strain>K12</strain>
    </source>
</reference>
<reference key="2">
    <citation type="journal article" date="1989" name="J. Biol. Chem.">
        <title>Characterization of the cysJIH regions of Salmonella typhimurium and Escherichia coli B. DNA sequences of cysI and cysH and a model for the siroheme-Fe4S4 active center of sulfite reductase hemoprotein based on amino acid homology with spinach nitrite reductase.</title>
        <authorList>
            <person name="Ostrowski J."/>
            <person name="Wu J.-Y."/>
            <person name="Rueger D.C."/>
            <person name="Miller B.E."/>
            <person name="Siegel L.M."/>
            <person name="Kredich N.M."/>
        </authorList>
    </citation>
    <scope>NUCLEOTIDE SEQUENCE [GENOMIC DNA]</scope>
    <source>
        <strain>B</strain>
    </source>
</reference>
<reference key="3">
    <citation type="journal article" date="1997" name="Science">
        <title>The complete genome sequence of Escherichia coli K-12.</title>
        <authorList>
            <person name="Blattner F.R."/>
            <person name="Plunkett G. III"/>
            <person name="Bloch C.A."/>
            <person name="Perna N.T."/>
            <person name="Burland V."/>
            <person name="Riley M."/>
            <person name="Collado-Vides J."/>
            <person name="Glasner J.D."/>
            <person name="Rode C.K."/>
            <person name="Mayhew G.F."/>
            <person name="Gregor J."/>
            <person name="Davis N.W."/>
            <person name="Kirkpatrick H.A."/>
            <person name="Goeden M.A."/>
            <person name="Rose D.J."/>
            <person name="Mau B."/>
            <person name="Shao Y."/>
        </authorList>
    </citation>
    <scope>NUCLEOTIDE SEQUENCE [LARGE SCALE GENOMIC DNA]</scope>
    <source>
        <strain>K12 / MG1655 / ATCC 47076</strain>
    </source>
</reference>
<reference key="4">
    <citation type="journal article" date="2006" name="Mol. Syst. Biol.">
        <title>Highly accurate genome sequences of Escherichia coli K-12 strains MG1655 and W3110.</title>
        <authorList>
            <person name="Hayashi K."/>
            <person name="Morooka N."/>
            <person name="Yamamoto Y."/>
            <person name="Fujita K."/>
            <person name="Isono K."/>
            <person name="Choi S."/>
            <person name="Ohtsubo E."/>
            <person name="Baba T."/>
            <person name="Wanner B.L."/>
            <person name="Mori H."/>
            <person name="Horiuchi T."/>
        </authorList>
    </citation>
    <scope>NUCLEOTIDE SEQUENCE [LARGE SCALE GENOMIC DNA]</scope>
    <source>
        <strain>K12 / W3110 / ATCC 27325 / DSM 5911</strain>
    </source>
</reference>
<reference key="5">
    <citation type="journal article" date="1990" name="FEBS Lett.">
        <title>PAPS-reductase of Escherichia coli. Correlating the N-terminal amino acid sequence with the DNA of gene cys H.</title>
        <authorList>
            <person name="Krone F.A."/>
            <person name="Westphal G."/>
            <person name="Meyer H.E."/>
            <person name="Schwenn J.D."/>
        </authorList>
    </citation>
    <scope>PROTEIN SEQUENCE OF 2-18</scope>
</reference>
<reference key="6">
    <citation type="journal article" date="1995" name="Eur. J. Biochem.">
        <title>Reaction mechanism of thioredoxin: 3'-phospho-adenylylsulfate reductase investigated by site-directed mutagenesis.</title>
        <authorList>
            <person name="Berendt U."/>
            <person name="Haverkamp T."/>
            <person name="Prior A."/>
            <person name="Schwenn J.D."/>
        </authorList>
    </citation>
    <scope>FUNCTION</scope>
    <scope>CATALYTIC ACTIVITY</scope>
    <scope>ACTIVITY REGULATION</scope>
    <scope>BIOPHYSICOCHEMICAL PROPERTIES</scope>
    <scope>SUBUNIT</scope>
    <scope>MUTAGENESIS OF TYR-209 AND CYS-239</scope>
</reference>
<reference evidence="11" key="7">
    <citation type="journal article" date="1997" name="Structure">
        <title>Crystal structure of phosphoadenylyl sulphate (PAPS) reductase: a new family of adenine nucleotide alpha hydrolases.</title>
        <authorList>
            <person name="Savage H."/>
            <person name="Montoya G."/>
            <person name="Svensson C."/>
            <person name="Schwenn J.D."/>
            <person name="Sinning I."/>
        </authorList>
    </citation>
    <scope>X-RAY CRYSTALLOGRAPHY (2.00 ANGSTROMS) OF 2-216</scope>
    <scope>SUBUNIT</scope>
    <scope>DOMAIN</scope>
</reference>
<reference evidence="12" key="8">
    <citation type="journal article" date="2007" name="Biochemistry">
        <title>3'-Phosphoadenosine-5'-phosphosulfate reductase in complex with thioredoxin: a structural snapshot in the catalytic cycle.</title>
        <authorList>
            <person name="Chartron J."/>
            <person name="Shiau C."/>
            <person name="Stout C.D."/>
            <person name="Carroll K.S."/>
        </authorList>
    </citation>
    <scope>X-RAY CRYSTALLOGRAPHY (3.00 ANGSTROMS) IN COMPLEX WITH THIOREDOXIN</scope>
    <scope>SUBUNIT</scope>
    <scope>ACTIVE SITE</scope>
</reference>
<keyword id="KW-0002">3D-structure</keyword>
<keyword id="KW-0963">Cytoplasm</keyword>
<keyword id="KW-0903">Direct protein sequencing</keyword>
<keyword id="KW-0560">Oxidoreductase</keyword>
<keyword id="KW-1185">Reference proteome</keyword>
<feature type="initiator methionine" description="Removed" evidence="3">
    <location>
        <position position="1"/>
    </location>
</feature>
<feature type="chain" id="PRO_0000100630" description="Phosphoadenosine 5'-phosphosulfate reductase">
    <location>
        <begin position="2"/>
        <end position="244"/>
    </location>
</feature>
<feature type="active site" description="Nucleophile; cysteine thiosulfonate intermediate" evidence="1 10">
    <location>
        <position position="239"/>
    </location>
</feature>
<feature type="mutagenesis site" description="Strong decrease in activity. 400-fold decrease in Vmax." evidence="4">
    <original>Y</original>
    <variation>F</variation>
    <location>
        <position position="209"/>
    </location>
</feature>
<feature type="mutagenesis site" description="Almost inactive. 4500-fold decrease in Vmax. Can still form dimers." evidence="4">
    <original>C</original>
    <variation>S</variation>
    <location>
        <position position="239"/>
    </location>
</feature>
<feature type="sequence conflict" description="In Ref. 2; AAA23652." evidence="9" ref="2">
    <original>E</original>
    <variation>Q</variation>
    <location>
        <position position="27"/>
    </location>
</feature>
<feature type="sequence conflict" description="In Ref. 2; AAA23652." evidence="9" ref="2">
    <original>A</original>
    <variation>S</variation>
    <location>
        <position position="226"/>
    </location>
</feature>
<feature type="helix" evidence="13">
    <location>
        <begin position="6"/>
        <end position="10"/>
    </location>
</feature>
<feature type="helix" evidence="13">
    <location>
        <begin position="14"/>
        <end position="28"/>
    </location>
</feature>
<feature type="helix" evidence="13">
    <location>
        <begin position="33"/>
        <end position="43"/>
    </location>
</feature>
<feature type="strand" evidence="13">
    <location>
        <begin position="46"/>
        <end position="51"/>
    </location>
</feature>
<feature type="turn" evidence="13">
    <location>
        <begin position="56"/>
        <end position="58"/>
    </location>
</feature>
<feature type="helix" evidence="13">
    <location>
        <begin position="59"/>
        <end position="68"/>
    </location>
</feature>
<feature type="strand" evidence="13">
    <location>
        <begin position="73"/>
        <end position="78"/>
    </location>
</feature>
<feature type="helix" evidence="13">
    <location>
        <begin position="84"/>
        <end position="96"/>
    </location>
</feature>
<feature type="strand" evidence="13">
    <location>
        <begin position="100"/>
        <end position="105"/>
    </location>
</feature>
<feature type="helix" evidence="13">
    <location>
        <begin position="110"/>
        <end position="117"/>
    </location>
</feature>
<feature type="helix" evidence="13">
    <location>
        <begin position="120"/>
        <end position="122"/>
    </location>
</feature>
<feature type="helix" evidence="13">
    <location>
        <begin position="124"/>
        <end position="135"/>
    </location>
</feature>
<feature type="helix" evidence="13">
    <location>
        <begin position="137"/>
        <end position="146"/>
    </location>
</feature>
<feature type="strand" evidence="13">
    <location>
        <begin position="149"/>
        <end position="153"/>
    </location>
</feature>
<feature type="strand" evidence="13">
    <location>
        <begin position="160"/>
        <end position="162"/>
    </location>
</feature>
<feature type="turn" evidence="13">
    <location>
        <begin position="163"/>
        <end position="166"/>
    </location>
</feature>
<feature type="strand" evidence="13">
    <location>
        <begin position="169"/>
        <end position="173"/>
    </location>
</feature>
<feature type="strand" evidence="13">
    <location>
        <begin position="176"/>
        <end position="179"/>
    </location>
</feature>
<feature type="turn" evidence="13">
    <location>
        <begin position="181"/>
        <end position="184"/>
    </location>
</feature>
<feature type="helix" evidence="13">
    <location>
        <begin position="187"/>
        <end position="197"/>
    </location>
</feature>
<feature type="helix" evidence="13">
    <location>
        <begin position="203"/>
        <end position="207"/>
    </location>
</feature>
<feature type="turn" evidence="14">
    <location>
        <begin position="216"/>
        <end position="218"/>
    </location>
</feature>
<proteinExistence type="evidence at protein level"/>
<sequence length="244" mass="27976">MSKLDLNALNELPKVDRILALAETNAELEKLDAEGRVAWALDNLPGEYVLSSSFGIQAAVSLHLVNQIRPDIPVILTDTGYLFPETYRFIDELTDKLKLNLKVYRATESAAWQEARYGKLWEQGVEGIEKYNDINKVEPMNRALKELNAQTWFAGLRREQSGSRANLPVLAIQRGVFKVLPIIDWDNRTIYQYLQKHGLKYHPLWDEGYLSVGDTHTTRKWEPGMAEEETRFFGLKRECGLHEG</sequence>
<protein>
    <recommendedName>
        <fullName evidence="1 6">Phosphoadenosine 5'-phosphosulfate reductase</fullName>
        <shortName evidence="1 7">PAPS reductase</shortName>
        <ecNumber evidence="1 4">1.8.4.8</ecNumber>
    </recommendedName>
    <alternativeName>
        <fullName evidence="1 8">3'-phosphoadenylylsulfate reductase</fullName>
    </alternativeName>
    <alternativeName>
        <fullName evidence="1">PAPS reductase, thioredoxin dependent</fullName>
    </alternativeName>
    <alternativeName>
        <fullName evidence="1">PAPS sulfotransferase</fullName>
    </alternativeName>
    <alternativeName>
        <fullName evidence="1 8">PAdoPS reductase</fullName>
    </alternativeName>
</protein>
<comment type="function">
    <text evidence="1 4">Catalyzes the formation of sulfite from phosphoadenosine 5'-phosphosulfate (PAPS) using thioredoxin as an electron donor.</text>
</comment>
<comment type="catalytic activity">
    <reaction evidence="1 4">
        <text>[thioredoxin]-disulfide + sulfite + adenosine 3',5'-bisphosphate + 2 H(+) = [thioredoxin]-dithiol + 3'-phosphoadenylyl sulfate</text>
        <dbReference type="Rhea" id="RHEA:11724"/>
        <dbReference type="Rhea" id="RHEA-COMP:10698"/>
        <dbReference type="Rhea" id="RHEA-COMP:10700"/>
        <dbReference type="ChEBI" id="CHEBI:15378"/>
        <dbReference type="ChEBI" id="CHEBI:17359"/>
        <dbReference type="ChEBI" id="CHEBI:29950"/>
        <dbReference type="ChEBI" id="CHEBI:50058"/>
        <dbReference type="ChEBI" id="CHEBI:58339"/>
        <dbReference type="ChEBI" id="CHEBI:58343"/>
        <dbReference type="EC" id="1.8.4.8"/>
    </reaction>
</comment>
<comment type="activity regulation">
    <text evidence="4">Severely inhibited by reagents which covalently modify Cys groups in proteins.</text>
</comment>
<comment type="biophysicochemical properties">
    <kinetics>
        <KM evidence="4">10 uM for phosphoadenosine 5'-phosphosulfate</KM>
        <KM evidence="4">23 uM for thioredoxin</KM>
        <Vmax evidence="4">94.0 umol/min/mg enzyme</Vmax>
    </kinetics>
</comment>
<comment type="pathway">
    <text evidence="1">Sulfur metabolism; hydrogen sulfide biosynthesis; sulfite from sulfate: step 3/3.</text>
</comment>
<comment type="subunit">
    <text evidence="2 4 5">Homodimer.</text>
</comment>
<comment type="subcellular location">
    <subcellularLocation>
        <location evidence="1 9">Cytoplasm</location>
    </subcellularLocation>
</comment>
<comment type="domain">
    <text evidence="5">The open, reduced form of PAPS reductase is able to bind PAPS, whereas the closed oxidized form cannot. A movement between the two monomers of the dimer may allow this switch in conformation to occur.</text>
</comment>
<comment type="similarity">
    <text evidence="1 9">Belongs to the PAPS reductase family. CysH subfamily.</text>
</comment>
<evidence type="ECO:0000255" key="1">
    <source>
        <dbReference type="HAMAP-Rule" id="MF_00063"/>
    </source>
</evidence>
<evidence type="ECO:0000269" key="2">
    <source>
    </source>
</evidence>
<evidence type="ECO:0000269" key="3">
    <source>
    </source>
</evidence>
<evidence type="ECO:0000269" key="4">
    <source>
    </source>
</evidence>
<evidence type="ECO:0000269" key="5">
    <source>
    </source>
</evidence>
<evidence type="ECO:0000303" key="6">
    <source>
    </source>
</evidence>
<evidence type="ECO:0000303" key="7">
    <source>
    </source>
</evidence>
<evidence type="ECO:0000303" key="8">
    <source>
    </source>
</evidence>
<evidence type="ECO:0000305" key="9"/>
<evidence type="ECO:0000305" key="10">
    <source>
    </source>
</evidence>
<evidence type="ECO:0007744" key="11">
    <source>
        <dbReference type="PDB" id="1SUR"/>
    </source>
</evidence>
<evidence type="ECO:0007744" key="12">
    <source>
        <dbReference type="PDB" id="2O8V"/>
    </source>
</evidence>
<evidence type="ECO:0007829" key="13">
    <source>
        <dbReference type="PDB" id="1SUR"/>
    </source>
</evidence>
<evidence type="ECO:0007829" key="14">
    <source>
        <dbReference type="PDB" id="2O8V"/>
    </source>
</evidence>
<gene>
    <name evidence="1" type="primary">cysH</name>
    <name type="ordered locus">b2762</name>
    <name type="ordered locus">JW2732</name>
</gene>
<accession>P17854</accession>
<accession>Q2MA67</accession>
<dbReference type="EC" id="1.8.4.8" evidence="1 4"/>
<dbReference type="EMBL" id="Y07525">
    <property type="protein sequence ID" value="CAA68817.1"/>
    <property type="molecule type" value="Genomic_DNA"/>
</dbReference>
<dbReference type="EMBL" id="M23008">
    <property type="protein sequence ID" value="AAA23652.1"/>
    <property type="molecule type" value="Genomic_DNA"/>
</dbReference>
<dbReference type="EMBL" id="U29579">
    <property type="protein sequence ID" value="AAA69272.1"/>
    <property type="molecule type" value="Genomic_DNA"/>
</dbReference>
<dbReference type="EMBL" id="U00096">
    <property type="protein sequence ID" value="AAC75804.1"/>
    <property type="molecule type" value="Genomic_DNA"/>
</dbReference>
<dbReference type="EMBL" id="AP009048">
    <property type="protein sequence ID" value="BAE76839.1"/>
    <property type="molecule type" value="Genomic_DNA"/>
</dbReference>
<dbReference type="PIR" id="S14221">
    <property type="entry name" value="RDECPA"/>
</dbReference>
<dbReference type="RefSeq" id="NP_417242.1">
    <property type="nucleotide sequence ID" value="NC_000913.3"/>
</dbReference>
<dbReference type="RefSeq" id="WP_000039850.1">
    <property type="nucleotide sequence ID" value="NZ_LN832404.1"/>
</dbReference>
<dbReference type="PDB" id="1SUR">
    <property type="method" value="X-ray"/>
    <property type="resolution" value="2.00 A"/>
    <property type="chains" value="A=2-216"/>
</dbReference>
<dbReference type="PDB" id="2O8V">
    <property type="method" value="X-ray"/>
    <property type="resolution" value="3.00 A"/>
    <property type="chains" value="A=1-244"/>
</dbReference>
<dbReference type="PDBsum" id="1SUR"/>
<dbReference type="PDBsum" id="2O8V"/>
<dbReference type="SMR" id="P17854"/>
<dbReference type="BioGRID" id="4261451">
    <property type="interactions" value="42"/>
</dbReference>
<dbReference type="BioGRID" id="851562">
    <property type="interactions" value="1"/>
</dbReference>
<dbReference type="FunCoup" id="P17854">
    <property type="interactions" value="423"/>
</dbReference>
<dbReference type="IntAct" id="P17854">
    <property type="interactions" value="4"/>
</dbReference>
<dbReference type="STRING" id="511145.b2762"/>
<dbReference type="jPOST" id="P17854"/>
<dbReference type="PaxDb" id="511145-b2762"/>
<dbReference type="EnsemblBacteria" id="AAC75804">
    <property type="protein sequence ID" value="AAC75804"/>
    <property type="gene ID" value="b2762"/>
</dbReference>
<dbReference type="GeneID" id="75058622"/>
<dbReference type="GeneID" id="947230"/>
<dbReference type="KEGG" id="ecj:JW2732"/>
<dbReference type="KEGG" id="eco:b2762"/>
<dbReference type="KEGG" id="ecoc:C3026_15180"/>
<dbReference type="PATRIC" id="fig|1411691.4.peg.3975"/>
<dbReference type="EchoBASE" id="EB0186"/>
<dbReference type="eggNOG" id="COG0175">
    <property type="taxonomic scope" value="Bacteria"/>
</dbReference>
<dbReference type="HOGENOM" id="CLU_044089_3_0_6"/>
<dbReference type="InParanoid" id="P17854"/>
<dbReference type="OMA" id="PIARWTQ"/>
<dbReference type="OrthoDB" id="9794018at2"/>
<dbReference type="PhylomeDB" id="P17854"/>
<dbReference type="BioCyc" id="EcoCyc:PAPSSULFOTRANS-MONOMER"/>
<dbReference type="BioCyc" id="MetaCyc:PAPSSULFOTRANS-MONOMER"/>
<dbReference type="BRENDA" id="1.8.4.8">
    <property type="organism ID" value="2026"/>
</dbReference>
<dbReference type="UniPathway" id="UPA00140">
    <property type="reaction ID" value="UER00206"/>
</dbReference>
<dbReference type="EvolutionaryTrace" id="P17854"/>
<dbReference type="PRO" id="PR:P17854"/>
<dbReference type="Proteomes" id="UP000000625">
    <property type="component" value="Chromosome"/>
</dbReference>
<dbReference type="GO" id="GO:0005737">
    <property type="term" value="C:cytoplasm"/>
    <property type="evidence" value="ECO:0007669"/>
    <property type="project" value="UniProtKB-SubCell"/>
</dbReference>
<dbReference type="GO" id="GO:0004604">
    <property type="term" value="F:phosphoadenylyl-sulfate reductase (thioredoxin) activity"/>
    <property type="evidence" value="ECO:0000314"/>
    <property type="project" value="EcoCyc"/>
</dbReference>
<dbReference type="GO" id="GO:0070814">
    <property type="term" value="P:hydrogen sulfide biosynthetic process"/>
    <property type="evidence" value="ECO:0007669"/>
    <property type="project" value="UniProtKB-UniRule"/>
</dbReference>
<dbReference type="GO" id="GO:0019379">
    <property type="term" value="P:sulfate assimilation, phosphoadenylyl sulfate reduction by phosphoadenylyl-sulfate reductase (thioredoxin)"/>
    <property type="evidence" value="ECO:0000314"/>
    <property type="project" value="EcoCyc"/>
</dbReference>
<dbReference type="GO" id="GO:0006790">
    <property type="term" value="P:sulfur compound metabolic process"/>
    <property type="evidence" value="ECO:0000314"/>
    <property type="project" value="EcoCyc"/>
</dbReference>
<dbReference type="CDD" id="cd23945">
    <property type="entry name" value="PAPS_reductase"/>
    <property type="match status" value="1"/>
</dbReference>
<dbReference type="FunFam" id="3.40.50.620:FF:000043">
    <property type="entry name" value="Phosphoadenosine phosphosulfate reductase"/>
    <property type="match status" value="1"/>
</dbReference>
<dbReference type="Gene3D" id="3.40.50.620">
    <property type="entry name" value="HUPs"/>
    <property type="match status" value="1"/>
</dbReference>
<dbReference type="HAMAP" id="MF_00063">
    <property type="entry name" value="CysH"/>
    <property type="match status" value="1"/>
</dbReference>
<dbReference type="InterPro" id="IPR004511">
    <property type="entry name" value="PAPS/APS_Rdtase"/>
</dbReference>
<dbReference type="InterPro" id="IPR002500">
    <property type="entry name" value="PAPS_reduct_dom"/>
</dbReference>
<dbReference type="InterPro" id="IPR011800">
    <property type="entry name" value="PAPS_reductase_CysH"/>
</dbReference>
<dbReference type="InterPro" id="IPR014729">
    <property type="entry name" value="Rossmann-like_a/b/a_fold"/>
</dbReference>
<dbReference type="NCBIfam" id="TIGR00434">
    <property type="entry name" value="cysH"/>
    <property type="match status" value="1"/>
</dbReference>
<dbReference type="NCBIfam" id="TIGR02057">
    <property type="entry name" value="PAPS_reductase"/>
    <property type="match status" value="1"/>
</dbReference>
<dbReference type="NCBIfam" id="NF002537">
    <property type="entry name" value="PRK02090.1"/>
    <property type="match status" value="1"/>
</dbReference>
<dbReference type="PANTHER" id="PTHR46509">
    <property type="entry name" value="PHOSPHOADENOSINE PHOSPHOSULFATE REDUCTASE"/>
    <property type="match status" value="1"/>
</dbReference>
<dbReference type="PANTHER" id="PTHR46509:SF1">
    <property type="entry name" value="PHOSPHOADENOSINE PHOSPHOSULFATE REDUCTASE"/>
    <property type="match status" value="1"/>
</dbReference>
<dbReference type="Pfam" id="PF01507">
    <property type="entry name" value="PAPS_reduct"/>
    <property type="match status" value="1"/>
</dbReference>
<dbReference type="PIRSF" id="PIRSF000857">
    <property type="entry name" value="PAPS_reductase"/>
    <property type="match status" value="1"/>
</dbReference>
<dbReference type="SUPFAM" id="SSF52402">
    <property type="entry name" value="Adenine nucleotide alpha hydrolases-like"/>
    <property type="match status" value="1"/>
</dbReference>